<dbReference type="EC" id="6.3.3.1" evidence="1"/>
<dbReference type="EMBL" id="CP000725">
    <property type="protein sequence ID" value="ABV10222.1"/>
    <property type="molecule type" value="Genomic_DNA"/>
</dbReference>
<dbReference type="RefSeq" id="WP_011999589.1">
    <property type="nucleotide sequence ID" value="NC_009785.1"/>
</dbReference>
<dbReference type="SMR" id="A8AU99"/>
<dbReference type="STRING" id="467705.SGO_0037"/>
<dbReference type="KEGG" id="sgo:SGO_0037"/>
<dbReference type="eggNOG" id="COG0150">
    <property type="taxonomic scope" value="Bacteria"/>
</dbReference>
<dbReference type="HOGENOM" id="CLU_047116_0_0_9"/>
<dbReference type="UniPathway" id="UPA00074">
    <property type="reaction ID" value="UER00129"/>
</dbReference>
<dbReference type="Proteomes" id="UP000001131">
    <property type="component" value="Chromosome"/>
</dbReference>
<dbReference type="GO" id="GO:0005829">
    <property type="term" value="C:cytosol"/>
    <property type="evidence" value="ECO:0007669"/>
    <property type="project" value="TreeGrafter"/>
</dbReference>
<dbReference type="GO" id="GO:0005524">
    <property type="term" value="F:ATP binding"/>
    <property type="evidence" value="ECO:0007669"/>
    <property type="project" value="UniProtKB-KW"/>
</dbReference>
<dbReference type="GO" id="GO:0004637">
    <property type="term" value="F:phosphoribosylamine-glycine ligase activity"/>
    <property type="evidence" value="ECO:0007669"/>
    <property type="project" value="TreeGrafter"/>
</dbReference>
<dbReference type="GO" id="GO:0004641">
    <property type="term" value="F:phosphoribosylformylglycinamidine cyclo-ligase activity"/>
    <property type="evidence" value="ECO:0007669"/>
    <property type="project" value="UniProtKB-UniRule"/>
</dbReference>
<dbReference type="GO" id="GO:0006189">
    <property type="term" value="P:'de novo' IMP biosynthetic process"/>
    <property type="evidence" value="ECO:0007669"/>
    <property type="project" value="UniProtKB-UniRule"/>
</dbReference>
<dbReference type="GO" id="GO:0046084">
    <property type="term" value="P:adenine biosynthetic process"/>
    <property type="evidence" value="ECO:0007669"/>
    <property type="project" value="TreeGrafter"/>
</dbReference>
<dbReference type="CDD" id="cd02196">
    <property type="entry name" value="PurM"/>
    <property type="match status" value="1"/>
</dbReference>
<dbReference type="FunFam" id="3.30.1330.10:FF:000001">
    <property type="entry name" value="Phosphoribosylformylglycinamidine cyclo-ligase"/>
    <property type="match status" value="1"/>
</dbReference>
<dbReference type="FunFam" id="3.90.650.10:FF:000011">
    <property type="entry name" value="Phosphoribosylformylglycinamidine cyclo-ligase"/>
    <property type="match status" value="1"/>
</dbReference>
<dbReference type="Gene3D" id="3.90.650.10">
    <property type="entry name" value="PurM-like C-terminal domain"/>
    <property type="match status" value="1"/>
</dbReference>
<dbReference type="Gene3D" id="3.30.1330.10">
    <property type="entry name" value="PurM-like, N-terminal domain"/>
    <property type="match status" value="1"/>
</dbReference>
<dbReference type="HAMAP" id="MF_00741">
    <property type="entry name" value="AIRS"/>
    <property type="match status" value="1"/>
</dbReference>
<dbReference type="InterPro" id="IPR010918">
    <property type="entry name" value="PurM-like_C_dom"/>
</dbReference>
<dbReference type="InterPro" id="IPR036676">
    <property type="entry name" value="PurM-like_C_sf"/>
</dbReference>
<dbReference type="InterPro" id="IPR016188">
    <property type="entry name" value="PurM-like_N"/>
</dbReference>
<dbReference type="InterPro" id="IPR036921">
    <property type="entry name" value="PurM-like_N_sf"/>
</dbReference>
<dbReference type="InterPro" id="IPR004733">
    <property type="entry name" value="PurM_cligase"/>
</dbReference>
<dbReference type="NCBIfam" id="TIGR00878">
    <property type="entry name" value="purM"/>
    <property type="match status" value="1"/>
</dbReference>
<dbReference type="PANTHER" id="PTHR10520:SF12">
    <property type="entry name" value="TRIFUNCTIONAL PURINE BIOSYNTHETIC PROTEIN ADENOSINE-3"/>
    <property type="match status" value="1"/>
</dbReference>
<dbReference type="PANTHER" id="PTHR10520">
    <property type="entry name" value="TRIFUNCTIONAL PURINE BIOSYNTHETIC PROTEIN ADENOSINE-3-RELATED"/>
    <property type="match status" value="1"/>
</dbReference>
<dbReference type="Pfam" id="PF00586">
    <property type="entry name" value="AIRS"/>
    <property type="match status" value="1"/>
</dbReference>
<dbReference type="Pfam" id="PF02769">
    <property type="entry name" value="AIRS_C"/>
    <property type="match status" value="1"/>
</dbReference>
<dbReference type="SUPFAM" id="SSF56042">
    <property type="entry name" value="PurM C-terminal domain-like"/>
    <property type="match status" value="1"/>
</dbReference>
<dbReference type="SUPFAM" id="SSF55326">
    <property type="entry name" value="PurM N-terminal domain-like"/>
    <property type="match status" value="1"/>
</dbReference>
<keyword id="KW-0067">ATP-binding</keyword>
<keyword id="KW-0963">Cytoplasm</keyword>
<keyword id="KW-0436">Ligase</keyword>
<keyword id="KW-0547">Nucleotide-binding</keyword>
<keyword id="KW-0658">Purine biosynthesis</keyword>
<keyword id="KW-1185">Reference proteome</keyword>
<feature type="chain" id="PRO_1000083470" description="Phosphoribosylformylglycinamidine cyclo-ligase">
    <location>
        <begin position="1"/>
        <end position="340"/>
    </location>
</feature>
<protein>
    <recommendedName>
        <fullName evidence="1">Phosphoribosylformylglycinamidine cyclo-ligase</fullName>
        <ecNumber evidence="1">6.3.3.1</ecNumber>
    </recommendedName>
    <alternativeName>
        <fullName evidence="1">AIR synthase</fullName>
    </alternativeName>
    <alternativeName>
        <fullName evidence="1">AIRS</fullName>
    </alternativeName>
    <alternativeName>
        <fullName evidence="1">Phosphoribosyl-aminoimidazole synthetase</fullName>
    </alternativeName>
</protein>
<comment type="catalytic activity">
    <reaction evidence="1">
        <text>2-formamido-N(1)-(5-O-phospho-beta-D-ribosyl)acetamidine + ATP = 5-amino-1-(5-phospho-beta-D-ribosyl)imidazole + ADP + phosphate + H(+)</text>
        <dbReference type="Rhea" id="RHEA:23032"/>
        <dbReference type="ChEBI" id="CHEBI:15378"/>
        <dbReference type="ChEBI" id="CHEBI:30616"/>
        <dbReference type="ChEBI" id="CHEBI:43474"/>
        <dbReference type="ChEBI" id="CHEBI:137981"/>
        <dbReference type="ChEBI" id="CHEBI:147287"/>
        <dbReference type="ChEBI" id="CHEBI:456216"/>
        <dbReference type="EC" id="6.3.3.1"/>
    </reaction>
</comment>
<comment type="pathway">
    <text evidence="1">Purine metabolism; IMP biosynthesis via de novo pathway; 5-amino-1-(5-phospho-D-ribosyl)imidazole from N(2)-formyl-N(1)-(5-phospho-D-ribosyl)glycinamide: step 2/2.</text>
</comment>
<comment type="subcellular location">
    <subcellularLocation>
        <location evidence="1">Cytoplasm</location>
    </subcellularLocation>
</comment>
<comment type="similarity">
    <text evidence="1">Belongs to the AIR synthase family.</text>
</comment>
<name>PUR5_STRGC</name>
<reference key="1">
    <citation type="journal article" date="2007" name="J. Bacteriol.">
        <title>Genome-wide transcriptional changes in Streptococcus gordonii in response to competence signaling peptide.</title>
        <authorList>
            <person name="Vickerman M.M."/>
            <person name="Iobst S."/>
            <person name="Jesionowski A.M."/>
            <person name="Gill S.R."/>
        </authorList>
    </citation>
    <scope>NUCLEOTIDE SEQUENCE [LARGE SCALE GENOMIC DNA]</scope>
    <source>
        <strain>Challis / ATCC 35105 / BCRC 15272 / CH1 / DL1 / V288</strain>
    </source>
</reference>
<accession>A8AU99</accession>
<gene>
    <name evidence="1" type="primary">purM</name>
    <name type="ordered locus">SGO_0037</name>
</gene>
<sequence>MTNKNAYAQSGVDVEAGYEVVERIKKHVARTERAGVMGALGGFGGMFDLSKTGVKEPVLISGTDGVGTKLMLAIKYDKHDTIGQDCVAMCVNDIIAAGAEPLYFLDYVATGKNEPAKLEQVVAGVAEGCVQAGAALIGGETAEMPGMYGEDDYDLAGFAVGVAEKSQIIDGSKVAEGDVLLGLASSGIHSNGYSLVRRVFADYTGEEVLPELEGKKLKEVLLEPTRIYVKAVLPLIKEELVNGIAHITGGGFIENVPRMFADDLAAEIEESKVPVLPIFKALEKYGEIKHEEMFEIFNMGVGLMLAVSPENVGRVKELLDEPVYEIGRIVKKENESVIIK</sequence>
<evidence type="ECO:0000255" key="1">
    <source>
        <dbReference type="HAMAP-Rule" id="MF_00741"/>
    </source>
</evidence>
<proteinExistence type="inferred from homology"/>
<organism>
    <name type="scientific">Streptococcus gordonii (strain Challis / ATCC 35105 / BCRC 15272 / CH1 / DL1 / V288)</name>
    <dbReference type="NCBI Taxonomy" id="467705"/>
    <lineage>
        <taxon>Bacteria</taxon>
        <taxon>Bacillati</taxon>
        <taxon>Bacillota</taxon>
        <taxon>Bacilli</taxon>
        <taxon>Lactobacillales</taxon>
        <taxon>Streptococcaceae</taxon>
        <taxon>Streptococcus</taxon>
    </lineage>
</organism>